<keyword id="KW-0997">Cell inner membrane</keyword>
<keyword id="KW-1003">Cell membrane</keyword>
<keyword id="KW-0378">Hydrolase</keyword>
<keyword id="KW-0472">Membrane</keyword>
<keyword id="KW-0479">Metal-binding</keyword>
<keyword id="KW-0482">Metalloprotease</keyword>
<keyword id="KW-0645">Protease</keyword>
<keyword id="KW-0812">Transmembrane</keyword>
<keyword id="KW-1133">Transmembrane helix</keyword>
<keyword id="KW-0862">Zinc</keyword>
<organism>
    <name type="scientific">Burkholderia pseudomallei (strain 1106a)</name>
    <dbReference type="NCBI Taxonomy" id="357348"/>
    <lineage>
        <taxon>Bacteria</taxon>
        <taxon>Pseudomonadati</taxon>
        <taxon>Pseudomonadota</taxon>
        <taxon>Betaproteobacteria</taxon>
        <taxon>Burkholderiales</taxon>
        <taxon>Burkholderiaceae</taxon>
        <taxon>Burkholderia</taxon>
        <taxon>pseudomallei group</taxon>
    </lineage>
</organism>
<gene>
    <name evidence="1" type="primary">htpX</name>
    <name type="ordered locus">BURPS1106A_0163</name>
</gene>
<feature type="chain" id="PRO_1000077455" description="Protease HtpX homolog">
    <location>
        <begin position="1"/>
        <end position="285"/>
    </location>
</feature>
<feature type="transmembrane region" description="Helical" evidence="1">
    <location>
        <begin position="7"/>
        <end position="27"/>
    </location>
</feature>
<feature type="transmembrane region" description="Helical" evidence="1">
    <location>
        <begin position="30"/>
        <end position="50"/>
    </location>
</feature>
<feature type="transmembrane region" description="Helical" evidence="1">
    <location>
        <begin position="146"/>
        <end position="166"/>
    </location>
</feature>
<feature type="transmembrane region" description="Helical" evidence="1">
    <location>
        <begin position="177"/>
        <end position="197"/>
    </location>
</feature>
<feature type="active site" evidence="1">
    <location>
        <position position="132"/>
    </location>
</feature>
<feature type="binding site" evidence="1">
    <location>
        <position position="131"/>
    </location>
    <ligand>
        <name>Zn(2+)</name>
        <dbReference type="ChEBI" id="CHEBI:29105"/>
        <note>catalytic</note>
    </ligand>
</feature>
<feature type="binding site" evidence="1">
    <location>
        <position position="135"/>
    </location>
    <ligand>
        <name>Zn(2+)</name>
        <dbReference type="ChEBI" id="CHEBI:29105"/>
        <note>catalytic</note>
    </ligand>
</feature>
<feature type="binding site" evidence="1">
    <location>
        <position position="202"/>
    </location>
    <ligand>
        <name>Zn(2+)</name>
        <dbReference type="ChEBI" id="CHEBI:29105"/>
        <note>catalytic</note>
    </ligand>
</feature>
<comment type="cofactor">
    <cofactor evidence="1">
        <name>Zn(2+)</name>
        <dbReference type="ChEBI" id="CHEBI:29105"/>
    </cofactor>
    <text evidence="1">Binds 1 zinc ion per subunit.</text>
</comment>
<comment type="subcellular location">
    <subcellularLocation>
        <location evidence="1">Cell inner membrane</location>
        <topology evidence="1">Multi-pass membrane protein</topology>
    </subcellularLocation>
</comment>
<comment type="similarity">
    <text evidence="1">Belongs to the peptidase M48B family.</text>
</comment>
<accession>A3NQ26</accession>
<protein>
    <recommendedName>
        <fullName evidence="1">Protease HtpX homolog</fullName>
        <ecNumber evidence="1">3.4.24.-</ecNumber>
    </recommendedName>
</protein>
<proteinExistence type="inferred from homology"/>
<sequence length="285" mass="30929">MFNWVKTAMLMAAITALFIVIGGMIGGSRGMTIALLIALGMNFFSYWFSDKMVLRMYNAQEVDEATAPQFYRMVRELATRANLPMPRVYLIDENQPNAFATGRNPEHAAVAATTGILRVLSEREMRGVMAHELAHVKHRDILISTISATMAGAISALANFAMFFGGRDENGRPANPIAGIAVALLAPIAGALIQMAISRAREFEADRGGAQISGDPQALASALDKIHRYASGIPFQTAEEHPATAQMMIMNPLSGGGLQNLFSTHPATEERIARLMDMARTGRFD</sequence>
<name>HTPX_BURP0</name>
<reference key="1">
    <citation type="journal article" date="2010" name="Genome Biol. Evol.">
        <title>Continuing evolution of Burkholderia mallei through genome reduction and large-scale rearrangements.</title>
        <authorList>
            <person name="Losada L."/>
            <person name="Ronning C.M."/>
            <person name="DeShazer D."/>
            <person name="Woods D."/>
            <person name="Fedorova N."/>
            <person name="Kim H.S."/>
            <person name="Shabalina S.A."/>
            <person name="Pearson T.R."/>
            <person name="Brinkac L."/>
            <person name="Tan P."/>
            <person name="Nandi T."/>
            <person name="Crabtree J."/>
            <person name="Badger J."/>
            <person name="Beckstrom-Sternberg S."/>
            <person name="Saqib M."/>
            <person name="Schutzer S.E."/>
            <person name="Keim P."/>
            <person name="Nierman W.C."/>
        </authorList>
    </citation>
    <scope>NUCLEOTIDE SEQUENCE [LARGE SCALE GENOMIC DNA]</scope>
    <source>
        <strain>1106a</strain>
    </source>
</reference>
<dbReference type="EC" id="3.4.24.-" evidence="1"/>
<dbReference type="EMBL" id="CP000572">
    <property type="protein sequence ID" value="ABN89886.1"/>
    <property type="molecule type" value="Genomic_DNA"/>
</dbReference>
<dbReference type="RefSeq" id="WP_004189409.1">
    <property type="nucleotide sequence ID" value="NC_009076.1"/>
</dbReference>
<dbReference type="GeneID" id="93058627"/>
<dbReference type="KEGG" id="bpl:BURPS1106A_0163"/>
<dbReference type="HOGENOM" id="CLU_042266_3_0_4"/>
<dbReference type="Proteomes" id="UP000006738">
    <property type="component" value="Chromosome I"/>
</dbReference>
<dbReference type="GO" id="GO:0005886">
    <property type="term" value="C:plasma membrane"/>
    <property type="evidence" value="ECO:0007669"/>
    <property type="project" value="UniProtKB-SubCell"/>
</dbReference>
<dbReference type="GO" id="GO:0004222">
    <property type="term" value="F:metalloendopeptidase activity"/>
    <property type="evidence" value="ECO:0007669"/>
    <property type="project" value="UniProtKB-UniRule"/>
</dbReference>
<dbReference type="GO" id="GO:0008270">
    <property type="term" value="F:zinc ion binding"/>
    <property type="evidence" value="ECO:0007669"/>
    <property type="project" value="UniProtKB-UniRule"/>
</dbReference>
<dbReference type="GO" id="GO:0006508">
    <property type="term" value="P:proteolysis"/>
    <property type="evidence" value="ECO:0007669"/>
    <property type="project" value="UniProtKB-KW"/>
</dbReference>
<dbReference type="CDD" id="cd07336">
    <property type="entry name" value="M48B_HtpX_like"/>
    <property type="match status" value="1"/>
</dbReference>
<dbReference type="Gene3D" id="3.30.2010.10">
    <property type="entry name" value="Metalloproteases ('zincins'), catalytic domain"/>
    <property type="match status" value="1"/>
</dbReference>
<dbReference type="HAMAP" id="MF_00188">
    <property type="entry name" value="Pept_M48_protease_HtpX"/>
    <property type="match status" value="1"/>
</dbReference>
<dbReference type="InterPro" id="IPR050083">
    <property type="entry name" value="HtpX_protease"/>
</dbReference>
<dbReference type="InterPro" id="IPR022919">
    <property type="entry name" value="Pept_M48_protease_HtpX"/>
</dbReference>
<dbReference type="InterPro" id="IPR001915">
    <property type="entry name" value="Peptidase_M48"/>
</dbReference>
<dbReference type="NCBIfam" id="NF002363">
    <property type="entry name" value="PRK01345.1"/>
    <property type="match status" value="1"/>
</dbReference>
<dbReference type="NCBIfam" id="NF002826">
    <property type="entry name" value="PRK03001.1"/>
    <property type="match status" value="1"/>
</dbReference>
<dbReference type="PANTHER" id="PTHR43221">
    <property type="entry name" value="PROTEASE HTPX"/>
    <property type="match status" value="1"/>
</dbReference>
<dbReference type="PANTHER" id="PTHR43221:SF1">
    <property type="entry name" value="PROTEASE HTPX"/>
    <property type="match status" value="1"/>
</dbReference>
<dbReference type="Pfam" id="PF01435">
    <property type="entry name" value="Peptidase_M48"/>
    <property type="match status" value="1"/>
</dbReference>
<evidence type="ECO:0000255" key="1">
    <source>
        <dbReference type="HAMAP-Rule" id="MF_00188"/>
    </source>
</evidence>